<feature type="chain" id="PRO_0000373729" description="Uncharacterized protein D79L">
    <location>
        <begin position="1"/>
        <end position="79"/>
    </location>
</feature>
<proteinExistence type="inferred from homology"/>
<accession>Q89675</accession>
<protein>
    <recommendedName>
        <fullName>Uncharacterized protein D79L</fullName>
        <shortName>pD79L</shortName>
    </recommendedName>
</protein>
<comment type="similarity">
    <text evidence="1">Belongs to the asfivirus D79L family.</text>
</comment>
<organism>
    <name type="scientific">African swine fever virus (strain Badajoz 1971 Vero-adapted)</name>
    <name type="common">Ba71V</name>
    <name type="synonym">ASFV</name>
    <dbReference type="NCBI Taxonomy" id="10498"/>
    <lineage>
        <taxon>Viruses</taxon>
        <taxon>Varidnaviria</taxon>
        <taxon>Bamfordvirae</taxon>
        <taxon>Nucleocytoviricota</taxon>
        <taxon>Pokkesviricetes</taxon>
        <taxon>Asfuvirales</taxon>
        <taxon>Asfarviridae</taxon>
        <taxon>Asfivirus</taxon>
        <taxon>African swine fever virus</taxon>
    </lineage>
</organism>
<name>VF79_ASFB7</name>
<evidence type="ECO:0000305" key="1"/>
<organismHost>
    <name type="scientific">Ornithodoros</name>
    <name type="common">relapsing fever ticks</name>
    <dbReference type="NCBI Taxonomy" id="6937"/>
</organismHost>
<organismHost>
    <name type="scientific">Sus scrofa</name>
    <name type="common">Pig</name>
    <dbReference type="NCBI Taxonomy" id="9823"/>
</organismHost>
<dbReference type="EMBL" id="L10061">
    <property type="protein sequence ID" value="AAA42695.1"/>
    <property type="molecule type" value="Genomic_DNA"/>
</dbReference>
<dbReference type="EMBL" id="U18466">
    <property type="protein sequence ID" value="AAA65333.1"/>
    <property type="molecule type" value="Genomic_DNA"/>
</dbReference>
<dbReference type="PIR" id="JT0667">
    <property type="entry name" value="JT0667"/>
</dbReference>
<dbReference type="RefSeq" id="NP_042797.1">
    <property type="nucleotide sequence ID" value="NC_001659.2"/>
</dbReference>
<dbReference type="GeneID" id="22220333"/>
<dbReference type="KEGG" id="vg:22220333"/>
<dbReference type="Proteomes" id="UP000000624">
    <property type="component" value="Segment"/>
</dbReference>
<gene>
    <name type="ordered locus">Ba71V-104</name>
    <name type="ORF">D79L</name>
</gene>
<sequence>MNKTIEYQKEFLKENNQLLSIPVKKNILKEILQNDEQDTIITNCITKEVSINLDLIKNPKVLYSIYIMVVEYLKSINIA</sequence>
<reference key="1">
    <citation type="journal article" date="1993" name="Gene">
        <title>Two putative African swine fever virus helicases similar to yeast 'DEAH' pre-mRNA processing proteins and vaccinia virus ATPases D11L and D6R.</title>
        <authorList>
            <person name="Yanez R.J."/>
            <person name="Rodriguez J.M."/>
            <person name="Boursnell M.E."/>
            <person name="Rodriguez J.F."/>
            <person name="Vinuela E."/>
        </authorList>
    </citation>
    <scope>NUCLEOTIDE SEQUENCE [GENOMIC DNA]</scope>
</reference>
<reference key="2">
    <citation type="journal article" date="1995" name="Virology">
        <title>Analysis of the complete nucleotide sequence of African swine fever virus.</title>
        <authorList>
            <person name="Yanez R.J."/>
            <person name="Rodriguez J.M."/>
            <person name="Nogal M.L."/>
            <person name="Yuste L."/>
            <person name="Enriquez C."/>
            <person name="Rodriguez J.F."/>
            <person name="Vinuela E."/>
        </authorList>
    </citation>
    <scope>NUCLEOTIDE SEQUENCE [LARGE SCALE GENOMIC DNA]</scope>
</reference>
<keyword id="KW-1185">Reference proteome</keyword>